<feature type="chain" id="PRO_0000188811" description="4-hydroxythreonine-4-phosphate dehydrogenase">
    <location>
        <begin position="1"/>
        <end position="329"/>
    </location>
</feature>
<feature type="binding site" evidence="1">
    <location>
        <position position="136"/>
    </location>
    <ligand>
        <name>substrate</name>
    </ligand>
</feature>
<feature type="binding site" evidence="1">
    <location>
        <position position="137"/>
    </location>
    <ligand>
        <name>substrate</name>
    </ligand>
</feature>
<feature type="binding site" evidence="1">
    <location>
        <position position="166"/>
    </location>
    <ligand>
        <name>a divalent metal cation</name>
        <dbReference type="ChEBI" id="CHEBI:60240"/>
        <note>ligand shared between dimeric partners</note>
    </ligand>
</feature>
<feature type="binding site" evidence="1">
    <location>
        <position position="211"/>
    </location>
    <ligand>
        <name>a divalent metal cation</name>
        <dbReference type="ChEBI" id="CHEBI:60240"/>
        <note>ligand shared between dimeric partners</note>
    </ligand>
</feature>
<feature type="binding site" evidence="1">
    <location>
        <position position="266"/>
    </location>
    <ligand>
        <name>a divalent metal cation</name>
        <dbReference type="ChEBI" id="CHEBI:60240"/>
        <note>ligand shared between dimeric partners</note>
    </ligand>
</feature>
<feature type="binding site" evidence="1">
    <location>
        <position position="274"/>
    </location>
    <ligand>
        <name>substrate</name>
    </ligand>
</feature>
<feature type="binding site" evidence="1">
    <location>
        <position position="283"/>
    </location>
    <ligand>
        <name>substrate</name>
    </ligand>
</feature>
<feature type="binding site" evidence="1">
    <location>
        <position position="292"/>
    </location>
    <ligand>
        <name>substrate</name>
    </ligand>
</feature>
<proteinExistence type="inferred from homology"/>
<dbReference type="EC" id="1.1.1.262" evidence="1"/>
<dbReference type="EMBL" id="AL157959">
    <property type="protein sequence ID" value="CAM07391.1"/>
    <property type="molecule type" value="Genomic_DNA"/>
</dbReference>
<dbReference type="PIR" id="G81998">
    <property type="entry name" value="G81998"/>
</dbReference>
<dbReference type="RefSeq" id="WP_002245804.1">
    <property type="nucleotide sequence ID" value="NC_003116.1"/>
</dbReference>
<dbReference type="SMR" id="Q9JX42"/>
<dbReference type="EnsemblBacteria" id="CAM07391">
    <property type="protein sequence ID" value="CAM07391"/>
    <property type="gene ID" value="NMA0072"/>
</dbReference>
<dbReference type="GeneID" id="93387274"/>
<dbReference type="KEGG" id="nma:NMA0072"/>
<dbReference type="HOGENOM" id="CLU_040168_2_0_4"/>
<dbReference type="UniPathway" id="UPA00244">
    <property type="reaction ID" value="UER00312"/>
</dbReference>
<dbReference type="Proteomes" id="UP000000626">
    <property type="component" value="Chromosome"/>
</dbReference>
<dbReference type="GO" id="GO:0005737">
    <property type="term" value="C:cytoplasm"/>
    <property type="evidence" value="ECO:0007669"/>
    <property type="project" value="UniProtKB-SubCell"/>
</dbReference>
<dbReference type="GO" id="GO:0050570">
    <property type="term" value="F:4-hydroxythreonine-4-phosphate dehydrogenase activity"/>
    <property type="evidence" value="ECO:0007669"/>
    <property type="project" value="UniProtKB-UniRule"/>
</dbReference>
<dbReference type="GO" id="GO:0050897">
    <property type="term" value="F:cobalt ion binding"/>
    <property type="evidence" value="ECO:0007669"/>
    <property type="project" value="UniProtKB-UniRule"/>
</dbReference>
<dbReference type="GO" id="GO:0000287">
    <property type="term" value="F:magnesium ion binding"/>
    <property type="evidence" value="ECO:0007669"/>
    <property type="project" value="UniProtKB-UniRule"/>
</dbReference>
<dbReference type="GO" id="GO:0051287">
    <property type="term" value="F:NAD binding"/>
    <property type="evidence" value="ECO:0007669"/>
    <property type="project" value="InterPro"/>
</dbReference>
<dbReference type="GO" id="GO:0008270">
    <property type="term" value="F:zinc ion binding"/>
    <property type="evidence" value="ECO:0007669"/>
    <property type="project" value="UniProtKB-UniRule"/>
</dbReference>
<dbReference type="GO" id="GO:0042823">
    <property type="term" value="P:pyridoxal phosphate biosynthetic process"/>
    <property type="evidence" value="ECO:0007669"/>
    <property type="project" value="UniProtKB-UniRule"/>
</dbReference>
<dbReference type="GO" id="GO:0008615">
    <property type="term" value="P:pyridoxine biosynthetic process"/>
    <property type="evidence" value="ECO:0007669"/>
    <property type="project" value="UniProtKB-UniRule"/>
</dbReference>
<dbReference type="Gene3D" id="3.40.718.10">
    <property type="entry name" value="Isopropylmalate Dehydrogenase"/>
    <property type="match status" value="1"/>
</dbReference>
<dbReference type="HAMAP" id="MF_00536">
    <property type="entry name" value="PdxA"/>
    <property type="match status" value="1"/>
</dbReference>
<dbReference type="InterPro" id="IPR037510">
    <property type="entry name" value="PdxA"/>
</dbReference>
<dbReference type="InterPro" id="IPR005255">
    <property type="entry name" value="PdxA_fam"/>
</dbReference>
<dbReference type="NCBIfam" id="TIGR00557">
    <property type="entry name" value="pdxA"/>
    <property type="match status" value="1"/>
</dbReference>
<dbReference type="PANTHER" id="PTHR30004">
    <property type="entry name" value="4-HYDROXYTHREONINE-4-PHOSPHATE DEHYDROGENASE"/>
    <property type="match status" value="1"/>
</dbReference>
<dbReference type="PANTHER" id="PTHR30004:SF5">
    <property type="entry name" value="4-HYDROXYTHREONINE-4-PHOSPHATE DEHYDROGENASE"/>
    <property type="match status" value="1"/>
</dbReference>
<dbReference type="Pfam" id="PF04166">
    <property type="entry name" value="PdxA"/>
    <property type="match status" value="1"/>
</dbReference>
<dbReference type="SUPFAM" id="SSF53659">
    <property type="entry name" value="Isocitrate/Isopropylmalate dehydrogenase-like"/>
    <property type="match status" value="1"/>
</dbReference>
<name>PDXA_NEIMA</name>
<organism>
    <name type="scientific">Neisseria meningitidis serogroup A / serotype 4A (strain DSM 15465 / Z2491)</name>
    <dbReference type="NCBI Taxonomy" id="122587"/>
    <lineage>
        <taxon>Bacteria</taxon>
        <taxon>Pseudomonadati</taxon>
        <taxon>Pseudomonadota</taxon>
        <taxon>Betaproteobacteria</taxon>
        <taxon>Neisseriales</taxon>
        <taxon>Neisseriaceae</taxon>
        <taxon>Neisseria</taxon>
    </lineage>
</organism>
<evidence type="ECO:0000255" key="1">
    <source>
        <dbReference type="HAMAP-Rule" id="MF_00536"/>
    </source>
</evidence>
<sequence length="329" mass="34586">MKQPVFAVTSGEPAGIGPDICLDLAFARLPCRCAVLGDKHLLRARAEALGKSVVLRDFDPESGGAAYGELEVLHIPAVEAVEAGKLNPANAAYVLQLLDTALAGISDGIFDGIVTAPLHKGIINDARASTGFFSGHTEYLAEKSGTGQVVMMLAGKDLRVALVTTHLPLKDVAAAITQPLIESVARILHHDLKHKFGIKNPKILVAGLNPHAGEGGHLGHEETDTIIPALENLRREGINLAGPYPADTLFQPFMLEGADAVLAMYHDQGLPVLKYHSFGQGVNITLGLPFIRTSVDHGTALDLAATGRADSGSLITAVETAVEMARGSL</sequence>
<accession>Q9JX42</accession>
<accession>A1INT4</accession>
<protein>
    <recommendedName>
        <fullName evidence="1">4-hydroxythreonine-4-phosphate dehydrogenase</fullName>
        <ecNumber evidence="1">1.1.1.262</ecNumber>
    </recommendedName>
    <alternativeName>
        <fullName evidence="1">4-(phosphohydroxy)-L-threonine dehydrogenase</fullName>
    </alternativeName>
</protein>
<reference key="1">
    <citation type="journal article" date="2000" name="Nature">
        <title>Complete DNA sequence of a serogroup A strain of Neisseria meningitidis Z2491.</title>
        <authorList>
            <person name="Parkhill J."/>
            <person name="Achtman M."/>
            <person name="James K.D."/>
            <person name="Bentley S.D."/>
            <person name="Churcher C.M."/>
            <person name="Klee S.R."/>
            <person name="Morelli G."/>
            <person name="Basham D."/>
            <person name="Brown D."/>
            <person name="Chillingworth T."/>
            <person name="Davies R.M."/>
            <person name="Davis P."/>
            <person name="Devlin K."/>
            <person name="Feltwell T."/>
            <person name="Hamlin N."/>
            <person name="Holroyd S."/>
            <person name="Jagels K."/>
            <person name="Leather S."/>
            <person name="Moule S."/>
            <person name="Mungall K.L."/>
            <person name="Quail M.A."/>
            <person name="Rajandream M.A."/>
            <person name="Rutherford K.M."/>
            <person name="Simmonds M."/>
            <person name="Skelton J."/>
            <person name="Whitehead S."/>
            <person name="Spratt B.G."/>
            <person name="Barrell B.G."/>
        </authorList>
    </citation>
    <scope>NUCLEOTIDE SEQUENCE [LARGE SCALE GENOMIC DNA]</scope>
    <source>
        <strain>DSM 15465 / Z2491</strain>
    </source>
</reference>
<gene>
    <name evidence="1" type="primary">pdxA</name>
    <name type="ordered locus">NMA0072</name>
</gene>
<comment type="function">
    <text evidence="1">Catalyzes the NAD(P)-dependent oxidation of 4-(phosphooxy)-L-threonine (HTP) into 2-amino-3-oxo-4-(phosphooxy)butyric acid which spontaneously decarboxylates to form 3-amino-2-oxopropyl phosphate (AHAP).</text>
</comment>
<comment type="catalytic activity">
    <reaction evidence="1">
        <text>4-(phosphooxy)-L-threonine + NAD(+) = 3-amino-2-oxopropyl phosphate + CO2 + NADH</text>
        <dbReference type="Rhea" id="RHEA:32275"/>
        <dbReference type="ChEBI" id="CHEBI:16526"/>
        <dbReference type="ChEBI" id="CHEBI:57279"/>
        <dbReference type="ChEBI" id="CHEBI:57540"/>
        <dbReference type="ChEBI" id="CHEBI:57945"/>
        <dbReference type="ChEBI" id="CHEBI:58452"/>
        <dbReference type="EC" id="1.1.1.262"/>
    </reaction>
</comment>
<comment type="cofactor">
    <cofactor evidence="1">
        <name>Zn(2+)</name>
        <dbReference type="ChEBI" id="CHEBI:29105"/>
    </cofactor>
    <cofactor evidence="1">
        <name>Mg(2+)</name>
        <dbReference type="ChEBI" id="CHEBI:18420"/>
    </cofactor>
    <cofactor evidence="1">
        <name>Co(2+)</name>
        <dbReference type="ChEBI" id="CHEBI:48828"/>
    </cofactor>
    <text evidence="1">Binds 1 divalent metal cation per subunit. Can use ions such as Zn(2+), Mg(2+) or Co(2+).</text>
</comment>
<comment type="pathway">
    <text evidence="1">Cofactor biosynthesis; pyridoxine 5'-phosphate biosynthesis; pyridoxine 5'-phosphate from D-erythrose 4-phosphate: step 4/5.</text>
</comment>
<comment type="subunit">
    <text evidence="1">Homodimer.</text>
</comment>
<comment type="subcellular location">
    <subcellularLocation>
        <location evidence="1">Cytoplasm</location>
    </subcellularLocation>
</comment>
<comment type="miscellaneous">
    <text evidence="1">The active site is located at the dimer interface.</text>
</comment>
<comment type="similarity">
    <text evidence="1">Belongs to the PdxA family.</text>
</comment>
<keyword id="KW-0170">Cobalt</keyword>
<keyword id="KW-0963">Cytoplasm</keyword>
<keyword id="KW-0460">Magnesium</keyword>
<keyword id="KW-0479">Metal-binding</keyword>
<keyword id="KW-0520">NAD</keyword>
<keyword id="KW-0521">NADP</keyword>
<keyword id="KW-0560">Oxidoreductase</keyword>
<keyword id="KW-0664">Pyridoxine biosynthesis</keyword>
<keyword id="KW-0862">Zinc</keyword>